<feature type="chain" id="PRO_0000152541" description="Probable tRNA pseudouridine synthase D 2">
    <location>
        <begin position="1"/>
        <end position="422"/>
    </location>
</feature>
<feature type="domain" description="TRUD" evidence="1">
    <location>
        <begin position="160"/>
        <end position="371"/>
    </location>
</feature>
<feature type="active site" description="Nucleophile" evidence="1">
    <location>
        <position position="89"/>
    </location>
</feature>
<reference key="1">
    <citation type="journal article" date="1996" name="Science">
        <title>Complete genome sequence of the methanogenic archaeon, Methanococcus jannaschii.</title>
        <authorList>
            <person name="Bult C.J."/>
            <person name="White O."/>
            <person name="Olsen G.J."/>
            <person name="Zhou L."/>
            <person name="Fleischmann R.D."/>
            <person name="Sutton G.G."/>
            <person name="Blake J.A."/>
            <person name="FitzGerald L.M."/>
            <person name="Clayton R.A."/>
            <person name="Gocayne J.D."/>
            <person name="Kerlavage A.R."/>
            <person name="Dougherty B.A."/>
            <person name="Tomb J.-F."/>
            <person name="Adams M.D."/>
            <person name="Reich C.I."/>
            <person name="Overbeek R."/>
            <person name="Kirkness E.F."/>
            <person name="Weinstock K.G."/>
            <person name="Merrick J.M."/>
            <person name="Glodek A."/>
            <person name="Scott J.L."/>
            <person name="Geoghagen N.S.M."/>
            <person name="Weidman J.F."/>
            <person name="Fuhrmann J.L."/>
            <person name="Nguyen D."/>
            <person name="Utterback T.R."/>
            <person name="Kelley J.M."/>
            <person name="Peterson J.D."/>
            <person name="Sadow P.W."/>
            <person name="Hanna M.C."/>
            <person name="Cotton M.D."/>
            <person name="Roberts K.M."/>
            <person name="Hurst M.A."/>
            <person name="Kaine B.P."/>
            <person name="Borodovsky M."/>
            <person name="Klenk H.-P."/>
            <person name="Fraser C.M."/>
            <person name="Smith H.O."/>
            <person name="Woese C.R."/>
            <person name="Venter J.C."/>
        </authorList>
    </citation>
    <scope>NUCLEOTIDE SEQUENCE [LARGE SCALE GENOMIC DNA]</scope>
    <source>
        <strain>ATCC 43067 / DSM 2661 / JAL-1 / JCM 10045 / NBRC 100440</strain>
    </source>
</reference>
<keyword id="KW-0413">Isomerase</keyword>
<keyword id="KW-1185">Reference proteome</keyword>
<keyword id="KW-0819">tRNA processing</keyword>
<dbReference type="EC" id="5.4.99.27" evidence="1"/>
<dbReference type="EMBL" id="L77117">
    <property type="protein sequence ID" value="AAB99372.1"/>
    <property type="status" value="ALT_INIT"/>
    <property type="molecule type" value="Genomic_DNA"/>
</dbReference>
<dbReference type="PIR" id="C64470">
    <property type="entry name" value="C64470"/>
</dbReference>
<dbReference type="RefSeq" id="WP_010870881.1">
    <property type="nucleotide sequence ID" value="NC_000909.1"/>
</dbReference>
<dbReference type="SMR" id="Q58759"/>
<dbReference type="FunCoup" id="Q58759">
    <property type="interactions" value="49"/>
</dbReference>
<dbReference type="STRING" id="243232.MJ_1364"/>
<dbReference type="PaxDb" id="243232-MJ_1364"/>
<dbReference type="EnsemblBacteria" id="AAB99372">
    <property type="protein sequence ID" value="AAB99372"/>
    <property type="gene ID" value="MJ_1364"/>
</dbReference>
<dbReference type="GeneID" id="1452266"/>
<dbReference type="KEGG" id="mja:MJ_1364"/>
<dbReference type="eggNOG" id="arCOG04252">
    <property type="taxonomic scope" value="Archaea"/>
</dbReference>
<dbReference type="HOGENOM" id="CLU_005281_4_1_2"/>
<dbReference type="InParanoid" id="Q58759"/>
<dbReference type="PhylomeDB" id="Q58759"/>
<dbReference type="Proteomes" id="UP000000805">
    <property type="component" value="Chromosome"/>
</dbReference>
<dbReference type="GO" id="GO:0009982">
    <property type="term" value="F:pseudouridine synthase activity"/>
    <property type="evidence" value="ECO:0000318"/>
    <property type="project" value="GO_Central"/>
</dbReference>
<dbReference type="GO" id="GO:0003723">
    <property type="term" value="F:RNA binding"/>
    <property type="evidence" value="ECO:0007669"/>
    <property type="project" value="InterPro"/>
</dbReference>
<dbReference type="GO" id="GO:0160150">
    <property type="term" value="F:tRNA pseudouridine(13) synthase activity"/>
    <property type="evidence" value="ECO:0007669"/>
    <property type="project" value="UniProtKB-EC"/>
</dbReference>
<dbReference type="GO" id="GO:0001522">
    <property type="term" value="P:pseudouridine synthesis"/>
    <property type="evidence" value="ECO:0000318"/>
    <property type="project" value="GO_Central"/>
</dbReference>
<dbReference type="GO" id="GO:0031119">
    <property type="term" value="P:tRNA pseudouridine synthesis"/>
    <property type="evidence" value="ECO:0007669"/>
    <property type="project" value="UniProtKB-UniRule"/>
</dbReference>
<dbReference type="CDD" id="cd02577">
    <property type="entry name" value="PSTD1"/>
    <property type="match status" value="1"/>
</dbReference>
<dbReference type="FunFam" id="3.30.70.3160:FF:000001">
    <property type="entry name" value="Probable tRNA pseudouridine synthase D"/>
    <property type="match status" value="1"/>
</dbReference>
<dbReference type="FunFam" id="1.10.1510.30:FF:000004">
    <property type="entry name" value="Probable tRNA pseudouridine synthase D 2"/>
    <property type="match status" value="1"/>
</dbReference>
<dbReference type="Gene3D" id="1.10.1510.30">
    <property type="match status" value="1"/>
</dbReference>
<dbReference type="Gene3D" id="3.30.70.3160">
    <property type="match status" value="1"/>
</dbReference>
<dbReference type="Gene3D" id="3.30.2350.20">
    <property type="entry name" value="TruD, catalytic domain"/>
    <property type="match status" value="1"/>
</dbReference>
<dbReference type="HAMAP" id="MF_01082">
    <property type="entry name" value="TruD"/>
    <property type="match status" value="1"/>
</dbReference>
<dbReference type="InterPro" id="IPR020103">
    <property type="entry name" value="PsdUridine_synth_cat_dom_sf"/>
</dbReference>
<dbReference type="InterPro" id="IPR001656">
    <property type="entry name" value="PsdUridine_synth_TruD"/>
</dbReference>
<dbReference type="InterPro" id="IPR020119">
    <property type="entry name" value="PsdUridine_synth_TruD_CS"/>
</dbReference>
<dbReference type="InterPro" id="IPR011760">
    <property type="entry name" value="PsdUridine_synth_TruD_insert"/>
</dbReference>
<dbReference type="InterPro" id="IPR042214">
    <property type="entry name" value="TruD_catalytic"/>
</dbReference>
<dbReference type="NCBIfam" id="NF002160">
    <property type="entry name" value="PRK00984.2-5"/>
    <property type="match status" value="1"/>
</dbReference>
<dbReference type="PANTHER" id="PTHR13326:SF21">
    <property type="entry name" value="PSEUDOURIDYLATE SYNTHASE PUS7L"/>
    <property type="match status" value="1"/>
</dbReference>
<dbReference type="PANTHER" id="PTHR13326">
    <property type="entry name" value="TRNA PSEUDOURIDINE SYNTHASE D"/>
    <property type="match status" value="1"/>
</dbReference>
<dbReference type="Pfam" id="PF01142">
    <property type="entry name" value="TruD"/>
    <property type="match status" value="1"/>
</dbReference>
<dbReference type="SUPFAM" id="SSF55120">
    <property type="entry name" value="Pseudouridine synthase"/>
    <property type="match status" value="1"/>
</dbReference>
<dbReference type="PROSITE" id="PS50984">
    <property type="entry name" value="TRUD"/>
    <property type="match status" value="1"/>
</dbReference>
<dbReference type="PROSITE" id="PS01268">
    <property type="entry name" value="UPF0024"/>
    <property type="match status" value="1"/>
</dbReference>
<name>TRUD2_METJA</name>
<organism>
    <name type="scientific">Methanocaldococcus jannaschii (strain ATCC 43067 / DSM 2661 / JAL-1 / JCM 10045 / NBRC 100440)</name>
    <name type="common">Methanococcus jannaschii</name>
    <dbReference type="NCBI Taxonomy" id="243232"/>
    <lineage>
        <taxon>Archaea</taxon>
        <taxon>Methanobacteriati</taxon>
        <taxon>Methanobacteriota</taxon>
        <taxon>Methanomada group</taxon>
        <taxon>Methanococci</taxon>
        <taxon>Methanococcales</taxon>
        <taxon>Methanocaldococcaceae</taxon>
        <taxon>Methanocaldococcus</taxon>
    </lineage>
</organism>
<evidence type="ECO:0000255" key="1">
    <source>
        <dbReference type="HAMAP-Rule" id="MF_01082"/>
    </source>
</evidence>
<evidence type="ECO:0000305" key="2"/>
<comment type="function">
    <text evidence="1">Could be responsible for synthesis of pseudouridine from uracil-13 in transfer RNAs.</text>
</comment>
<comment type="catalytic activity">
    <reaction evidence="1">
        <text>uridine(13) in tRNA = pseudouridine(13) in tRNA</text>
        <dbReference type="Rhea" id="RHEA:42540"/>
        <dbReference type="Rhea" id="RHEA-COMP:10105"/>
        <dbReference type="Rhea" id="RHEA-COMP:10106"/>
        <dbReference type="ChEBI" id="CHEBI:65314"/>
        <dbReference type="ChEBI" id="CHEBI:65315"/>
        <dbReference type="EC" id="5.4.99.27"/>
    </reaction>
</comment>
<comment type="similarity">
    <text evidence="1">Belongs to the pseudouridine synthase TruD family.</text>
</comment>
<comment type="sequence caution" evidence="2">
    <conflict type="erroneous initiation">
        <sequence resource="EMBL-CDS" id="AAB99372"/>
    </conflict>
</comment>
<proteinExistence type="inferred from homology"/>
<gene>
    <name evidence="1" type="primary">truD2</name>
    <name type="ordered locus">MJ1364</name>
</gene>
<sequence>MKNISTKESFFKFKFNNRSLYCWGAFMKLRMKPEDFIVEEIIDFNKIAGDRCYLYKLTKRNIESLKAFSYIAKKFKIPLKDIGYCGLKDRHALTTQYISIPKKYGKLSLDEPNLKLELIGESKFLLLGDLEGNRFTITVRGLKKEDIPKIKENLKYLEFGAPNYFDSQRFGSVFDKKFIAKEVIKGNYEEAVKILLTKYKKSEKKLIKDLKRFIDKNWGDWDKIWEYIKENNIKSRLYVNMVKELKKSNDYKKALSYVDDRLKKIFVAAYQSYLWNECVKELLRKYVPEEDRVYYEYECGTLMFYKKMDEEVFNILKDKKFPTIAPDIEYSGEEKEIIEEILKREGLTMEELNNIGELGKFIYSERKILSIPKNLKIGEFEEDELNKGKYKITLSYELEKGSYATIIIKRAFLGVKTKKRKR</sequence>
<protein>
    <recommendedName>
        <fullName evidence="1">Probable tRNA pseudouridine synthase D 2</fullName>
        <ecNumber evidence="1">5.4.99.27</ecNumber>
    </recommendedName>
    <alternativeName>
        <fullName evidence="1">tRNA pseudouridine(13) synthase</fullName>
    </alternativeName>
    <alternativeName>
        <fullName evidence="1">tRNA pseudouridylate synthase D 2</fullName>
    </alternativeName>
    <alternativeName>
        <fullName evidence="1">tRNA-uridine isomerase D 2</fullName>
    </alternativeName>
</protein>
<accession>Q58759</accession>